<sequence>MYPVDLHMHTVASTHAYSTLSDYIAQAKQKGIKLFAITDHGPDMEDAPHHWHFINMRIWPRVVDGVGILRGIEANIKNVDGEIDCSGKMFDSLDLIIAGFHEPVFAPHDKATNTQAMIATIASGNVHIISHPGNPKYEIDVKAVAEAAAKHQVALEINNSSFLHSRKGSEDNCRAVAAAVRDAGGWVALGSDSHTAFTMGEFEECLKILDAVDFPPERILNVSPRRLLNFLESRGMAPIAEFADL</sequence>
<evidence type="ECO:0000255" key="1">
    <source>
        <dbReference type="HAMAP-Rule" id="MF_01561"/>
    </source>
</evidence>
<accession>B1LIY0</accession>
<name>YCDX_ECOSM</name>
<proteinExistence type="inferred from homology"/>
<organism>
    <name type="scientific">Escherichia coli (strain SMS-3-5 / SECEC)</name>
    <dbReference type="NCBI Taxonomy" id="439855"/>
    <lineage>
        <taxon>Bacteria</taxon>
        <taxon>Pseudomonadati</taxon>
        <taxon>Pseudomonadota</taxon>
        <taxon>Gammaproteobacteria</taxon>
        <taxon>Enterobacterales</taxon>
        <taxon>Enterobacteriaceae</taxon>
        <taxon>Escherichia</taxon>
    </lineage>
</organism>
<reference key="1">
    <citation type="journal article" date="2008" name="J. Bacteriol.">
        <title>Insights into the environmental resistance gene pool from the genome sequence of the multidrug-resistant environmental isolate Escherichia coli SMS-3-5.</title>
        <authorList>
            <person name="Fricke W.F."/>
            <person name="Wright M.S."/>
            <person name="Lindell A.H."/>
            <person name="Harkins D.M."/>
            <person name="Baker-Austin C."/>
            <person name="Ravel J."/>
            <person name="Stepanauskas R."/>
        </authorList>
    </citation>
    <scope>NUCLEOTIDE SEQUENCE [LARGE SCALE GENOMIC DNA]</scope>
    <source>
        <strain>SMS-3-5 / SECEC</strain>
    </source>
</reference>
<comment type="cofactor">
    <cofactor evidence="1">
        <name>Zn(2+)</name>
        <dbReference type="ChEBI" id="CHEBI:29105"/>
    </cofactor>
    <text evidence="1">Binds 3 Zn(2+) ions per subunit.</text>
</comment>
<comment type="subunit">
    <text evidence="1">Homotrimer.</text>
</comment>
<comment type="similarity">
    <text evidence="1">Belongs to the PHP family.</text>
</comment>
<gene>
    <name evidence="1" type="primary">ycdX</name>
    <name type="ordered locus">EcSMS35_2099</name>
</gene>
<keyword id="KW-0378">Hydrolase</keyword>
<keyword id="KW-0479">Metal-binding</keyword>
<keyword id="KW-0862">Zinc</keyword>
<dbReference type="EC" id="3.1.3.-" evidence="1"/>
<dbReference type="EMBL" id="CP000970">
    <property type="protein sequence ID" value="ACB17951.1"/>
    <property type="molecule type" value="Genomic_DNA"/>
</dbReference>
<dbReference type="RefSeq" id="WP_000283664.1">
    <property type="nucleotide sequence ID" value="NC_010498.1"/>
</dbReference>
<dbReference type="SMR" id="B1LIY0"/>
<dbReference type="GeneID" id="93776384"/>
<dbReference type="KEGG" id="ecm:EcSMS35_2099"/>
<dbReference type="HOGENOM" id="CLU_061999_0_1_6"/>
<dbReference type="Proteomes" id="UP000007011">
    <property type="component" value="Chromosome"/>
</dbReference>
<dbReference type="GO" id="GO:0005829">
    <property type="term" value="C:cytosol"/>
    <property type="evidence" value="ECO:0007669"/>
    <property type="project" value="TreeGrafter"/>
</dbReference>
<dbReference type="GO" id="GO:0016791">
    <property type="term" value="F:phosphatase activity"/>
    <property type="evidence" value="ECO:0007669"/>
    <property type="project" value="UniProtKB-UniRule"/>
</dbReference>
<dbReference type="GO" id="GO:0008270">
    <property type="term" value="F:zinc ion binding"/>
    <property type="evidence" value="ECO:0007669"/>
    <property type="project" value="UniProtKB-UniRule"/>
</dbReference>
<dbReference type="GO" id="GO:0071978">
    <property type="term" value="P:bacterial-type flagellum-dependent swarming motility"/>
    <property type="evidence" value="ECO:0007669"/>
    <property type="project" value="TreeGrafter"/>
</dbReference>
<dbReference type="CDD" id="cd07437">
    <property type="entry name" value="PHP_HisPPase_Ycdx_like"/>
    <property type="match status" value="1"/>
</dbReference>
<dbReference type="FunFam" id="3.20.20.140:FF:000008">
    <property type="entry name" value="Probable phosphatase YcdX"/>
    <property type="match status" value="1"/>
</dbReference>
<dbReference type="Gene3D" id="3.20.20.140">
    <property type="entry name" value="Metal-dependent hydrolases"/>
    <property type="match status" value="1"/>
</dbReference>
<dbReference type="HAMAP" id="MF_01561">
    <property type="entry name" value="YcdX_phosphat"/>
    <property type="match status" value="1"/>
</dbReference>
<dbReference type="InterPro" id="IPR023710">
    <property type="entry name" value="Phosphatase_YcdX_put"/>
</dbReference>
<dbReference type="InterPro" id="IPR004013">
    <property type="entry name" value="PHP_dom"/>
</dbReference>
<dbReference type="InterPro" id="IPR050243">
    <property type="entry name" value="PHP_phosphatase"/>
</dbReference>
<dbReference type="InterPro" id="IPR003141">
    <property type="entry name" value="Pol/His_phosphatase_N"/>
</dbReference>
<dbReference type="InterPro" id="IPR016195">
    <property type="entry name" value="Pol/histidinol_Pase-like"/>
</dbReference>
<dbReference type="NCBIfam" id="NF006702">
    <property type="entry name" value="PRK09248.1"/>
    <property type="match status" value="1"/>
</dbReference>
<dbReference type="PANTHER" id="PTHR36928">
    <property type="entry name" value="PHOSPHATASE YCDX-RELATED"/>
    <property type="match status" value="1"/>
</dbReference>
<dbReference type="PANTHER" id="PTHR36928:SF1">
    <property type="entry name" value="PHOSPHATASE YCDX-RELATED"/>
    <property type="match status" value="1"/>
</dbReference>
<dbReference type="Pfam" id="PF02811">
    <property type="entry name" value="PHP"/>
    <property type="match status" value="1"/>
</dbReference>
<dbReference type="SMART" id="SM00481">
    <property type="entry name" value="POLIIIAc"/>
    <property type="match status" value="1"/>
</dbReference>
<dbReference type="SUPFAM" id="SSF89550">
    <property type="entry name" value="PHP domain-like"/>
    <property type="match status" value="1"/>
</dbReference>
<feature type="chain" id="PRO_1000147136" description="Probable phosphatase YcdX">
    <location>
        <begin position="1"/>
        <end position="245"/>
    </location>
</feature>
<feature type="binding site" evidence="1">
    <location>
        <position position="7"/>
    </location>
    <ligand>
        <name>Zn(2+)</name>
        <dbReference type="ChEBI" id="CHEBI:29105"/>
        <label>1</label>
    </ligand>
</feature>
<feature type="binding site" evidence="1">
    <location>
        <position position="9"/>
    </location>
    <ligand>
        <name>Zn(2+)</name>
        <dbReference type="ChEBI" id="CHEBI:29105"/>
        <label>1</label>
    </ligand>
</feature>
<feature type="binding site" evidence="1">
    <location>
        <position position="15"/>
    </location>
    <ligand>
        <name>Zn(2+)</name>
        <dbReference type="ChEBI" id="CHEBI:29105"/>
        <label>2</label>
    </ligand>
</feature>
<feature type="binding site" evidence="1">
    <location>
        <position position="40"/>
    </location>
    <ligand>
        <name>Zn(2+)</name>
        <dbReference type="ChEBI" id="CHEBI:29105"/>
        <label>2</label>
    </ligand>
</feature>
<feature type="binding site" evidence="1">
    <location>
        <position position="73"/>
    </location>
    <ligand>
        <name>Zn(2+)</name>
        <dbReference type="ChEBI" id="CHEBI:29105"/>
        <label>1</label>
    </ligand>
</feature>
<feature type="binding site" evidence="1">
    <location>
        <position position="73"/>
    </location>
    <ligand>
        <name>Zn(2+)</name>
        <dbReference type="ChEBI" id="CHEBI:29105"/>
        <label>3</label>
    </ligand>
</feature>
<feature type="binding site" evidence="1">
    <location>
        <position position="101"/>
    </location>
    <ligand>
        <name>Zn(2+)</name>
        <dbReference type="ChEBI" id="CHEBI:29105"/>
        <label>3</label>
    </ligand>
</feature>
<feature type="binding site" evidence="1">
    <location>
        <position position="131"/>
    </location>
    <ligand>
        <name>Zn(2+)</name>
        <dbReference type="ChEBI" id="CHEBI:29105"/>
        <label>3</label>
    </ligand>
</feature>
<feature type="binding site" evidence="1">
    <location>
        <position position="192"/>
    </location>
    <ligand>
        <name>Zn(2+)</name>
        <dbReference type="ChEBI" id="CHEBI:29105"/>
        <label>1</label>
    </ligand>
</feature>
<feature type="binding site" evidence="1">
    <location>
        <position position="194"/>
    </location>
    <ligand>
        <name>Zn(2+)</name>
        <dbReference type="ChEBI" id="CHEBI:29105"/>
        <label>2</label>
    </ligand>
</feature>
<protein>
    <recommendedName>
        <fullName evidence="1">Probable phosphatase YcdX</fullName>
        <ecNumber evidence="1">3.1.3.-</ecNumber>
    </recommendedName>
</protein>